<keyword id="KW-0687">Ribonucleoprotein</keyword>
<keyword id="KW-0689">Ribosomal protein</keyword>
<keyword id="KW-0694">RNA-binding</keyword>
<keyword id="KW-0699">rRNA-binding</keyword>
<protein>
    <recommendedName>
        <fullName evidence="1">Large ribosomal subunit protein uL10</fullName>
    </recommendedName>
    <alternativeName>
        <fullName evidence="2">50S ribosomal protein L10</fullName>
    </alternativeName>
</protein>
<feature type="chain" id="PRO_1000195561" description="Large ribosomal subunit protein uL10">
    <location>
        <begin position="1"/>
        <end position="172"/>
    </location>
</feature>
<reference key="1">
    <citation type="submission" date="2008-06" db="EMBL/GenBank/DDBJ databases">
        <title>Complete sequence of chromosome of Prosthecochloris aestuarii DSM 271.</title>
        <authorList>
            <consortium name="US DOE Joint Genome Institute"/>
            <person name="Lucas S."/>
            <person name="Copeland A."/>
            <person name="Lapidus A."/>
            <person name="Glavina del Rio T."/>
            <person name="Dalin E."/>
            <person name="Tice H."/>
            <person name="Bruce D."/>
            <person name="Goodwin L."/>
            <person name="Pitluck S."/>
            <person name="Schmutz J."/>
            <person name="Larimer F."/>
            <person name="Land M."/>
            <person name="Hauser L."/>
            <person name="Kyrpides N."/>
            <person name="Anderson I."/>
            <person name="Liu Z."/>
            <person name="Li T."/>
            <person name="Zhao F."/>
            <person name="Overmann J."/>
            <person name="Bryant D.A."/>
            <person name="Richardson P."/>
        </authorList>
    </citation>
    <scope>NUCLEOTIDE SEQUENCE [LARGE SCALE GENOMIC DNA]</scope>
    <source>
        <strain>DSM 271 / SK 413</strain>
    </source>
</reference>
<gene>
    <name evidence="1" type="primary">rplJ</name>
    <name type="ordered locus">Paes_0286</name>
</gene>
<proteinExistence type="inferred from homology"/>
<organism>
    <name type="scientific">Prosthecochloris aestuarii (strain DSM 271 / SK 413)</name>
    <dbReference type="NCBI Taxonomy" id="290512"/>
    <lineage>
        <taxon>Bacteria</taxon>
        <taxon>Pseudomonadati</taxon>
        <taxon>Chlorobiota</taxon>
        <taxon>Chlorobiia</taxon>
        <taxon>Chlorobiales</taxon>
        <taxon>Chlorobiaceae</taxon>
        <taxon>Prosthecochloris</taxon>
    </lineage>
</organism>
<accession>B4S495</accession>
<dbReference type="EMBL" id="CP001108">
    <property type="protein sequence ID" value="ACF45343.1"/>
    <property type="molecule type" value="Genomic_DNA"/>
</dbReference>
<dbReference type="RefSeq" id="WP_012504880.1">
    <property type="nucleotide sequence ID" value="NC_011059.1"/>
</dbReference>
<dbReference type="SMR" id="B4S495"/>
<dbReference type="STRING" id="290512.Paes_0286"/>
<dbReference type="KEGG" id="paa:Paes_0286"/>
<dbReference type="eggNOG" id="COG0244">
    <property type="taxonomic scope" value="Bacteria"/>
</dbReference>
<dbReference type="HOGENOM" id="CLU_092227_2_1_10"/>
<dbReference type="Proteomes" id="UP000002725">
    <property type="component" value="Chromosome"/>
</dbReference>
<dbReference type="GO" id="GO:0015934">
    <property type="term" value="C:large ribosomal subunit"/>
    <property type="evidence" value="ECO:0007669"/>
    <property type="project" value="InterPro"/>
</dbReference>
<dbReference type="GO" id="GO:0070180">
    <property type="term" value="F:large ribosomal subunit rRNA binding"/>
    <property type="evidence" value="ECO:0007669"/>
    <property type="project" value="UniProtKB-UniRule"/>
</dbReference>
<dbReference type="GO" id="GO:0003735">
    <property type="term" value="F:structural constituent of ribosome"/>
    <property type="evidence" value="ECO:0007669"/>
    <property type="project" value="InterPro"/>
</dbReference>
<dbReference type="GO" id="GO:0006412">
    <property type="term" value="P:translation"/>
    <property type="evidence" value="ECO:0007669"/>
    <property type="project" value="UniProtKB-UniRule"/>
</dbReference>
<dbReference type="CDD" id="cd05797">
    <property type="entry name" value="Ribosomal_L10"/>
    <property type="match status" value="1"/>
</dbReference>
<dbReference type="Gene3D" id="3.30.70.1730">
    <property type="match status" value="1"/>
</dbReference>
<dbReference type="Gene3D" id="6.10.250.290">
    <property type="match status" value="1"/>
</dbReference>
<dbReference type="HAMAP" id="MF_00362">
    <property type="entry name" value="Ribosomal_uL10"/>
    <property type="match status" value="1"/>
</dbReference>
<dbReference type="InterPro" id="IPR001790">
    <property type="entry name" value="Ribosomal_uL10"/>
</dbReference>
<dbReference type="InterPro" id="IPR043141">
    <property type="entry name" value="Ribosomal_uL10-like_sf"/>
</dbReference>
<dbReference type="InterPro" id="IPR022973">
    <property type="entry name" value="Ribosomal_uL10_bac"/>
</dbReference>
<dbReference type="InterPro" id="IPR047865">
    <property type="entry name" value="Ribosomal_uL10_bac_type"/>
</dbReference>
<dbReference type="InterPro" id="IPR002363">
    <property type="entry name" value="Ribosomal_uL10_CS_bac"/>
</dbReference>
<dbReference type="NCBIfam" id="NF000955">
    <property type="entry name" value="PRK00099.1-1"/>
    <property type="match status" value="1"/>
</dbReference>
<dbReference type="PANTHER" id="PTHR11560">
    <property type="entry name" value="39S RIBOSOMAL PROTEIN L10, MITOCHONDRIAL"/>
    <property type="match status" value="1"/>
</dbReference>
<dbReference type="Pfam" id="PF00466">
    <property type="entry name" value="Ribosomal_L10"/>
    <property type="match status" value="1"/>
</dbReference>
<dbReference type="SUPFAM" id="SSF160369">
    <property type="entry name" value="Ribosomal protein L10-like"/>
    <property type="match status" value="1"/>
</dbReference>
<dbReference type="PROSITE" id="PS01109">
    <property type="entry name" value="RIBOSOMAL_L10"/>
    <property type="match status" value="1"/>
</dbReference>
<sequence length="172" mass="18957">MKRDKKELIVQQVTEKLEKAQGIYLTDFQGLDVAKMAELRNEFRKVGVEYRVVKNTLVKKALENVAGGDRLAEGLYNTTGVAIGYDDPIVAAKVIEKFSKKNENLKFKMAAIDGSVFEASQLPQLASMLSKVENIGRVAGLVNNMVASVPMVVNAVMRDLVSVLDQVAKQKQ</sequence>
<name>RL10_PROA2</name>
<evidence type="ECO:0000255" key="1">
    <source>
        <dbReference type="HAMAP-Rule" id="MF_00362"/>
    </source>
</evidence>
<evidence type="ECO:0000305" key="2"/>
<comment type="function">
    <text evidence="1">Forms part of the ribosomal stalk, playing a central role in the interaction of the ribosome with GTP-bound translation factors.</text>
</comment>
<comment type="subunit">
    <text evidence="1">Part of the ribosomal stalk of the 50S ribosomal subunit. The N-terminus interacts with L11 and the large rRNA to form the base of the stalk. The C-terminus forms an elongated spine to which L12 dimers bind in a sequential fashion forming a multimeric L10(L12)X complex.</text>
</comment>
<comment type="similarity">
    <text evidence="1">Belongs to the universal ribosomal protein uL10 family.</text>
</comment>